<organism>
    <name type="scientific">Limosilactobacillus fermentum (strain NBRC 3956 / LMG 18251)</name>
    <name type="common">Lactobacillus fermentum</name>
    <dbReference type="NCBI Taxonomy" id="334390"/>
    <lineage>
        <taxon>Bacteria</taxon>
        <taxon>Bacillati</taxon>
        <taxon>Bacillota</taxon>
        <taxon>Bacilli</taxon>
        <taxon>Lactobacillales</taxon>
        <taxon>Lactobacillaceae</taxon>
        <taxon>Limosilactobacillus</taxon>
    </lineage>
</organism>
<dbReference type="EC" id="4.2.1.11" evidence="1"/>
<dbReference type="EMBL" id="AP008937">
    <property type="protein sequence ID" value="BAG26702.1"/>
    <property type="molecule type" value="Genomic_DNA"/>
</dbReference>
<dbReference type="RefSeq" id="WP_012390876.1">
    <property type="nucleotide sequence ID" value="NC_010610.1"/>
</dbReference>
<dbReference type="SMR" id="B2GAM0"/>
<dbReference type="GeneID" id="83715304"/>
<dbReference type="KEGG" id="lfe:LAF_0366"/>
<dbReference type="eggNOG" id="COG0148">
    <property type="taxonomic scope" value="Bacteria"/>
</dbReference>
<dbReference type="HOGENOM" id="CLU_031223_2_1_9"/>
<dbReference type="UniPathway" id="UPA00109">
    <property type="reaction ID" value="UER00187"/>
</dbReference>
<dbReference type="Proteomes" id="UP000001697">
    <property type="component" value="Chromosome"/>
</dbReference>
<dbReference type="GO" id="GO:0009986">
    <property type="term" value="C:cell surface"/>
    <property type="evidence" value="ECO:0007669"/>
    <property type="project" value="UniProtKB-SubCell"/>
</dbReference>
<dbReference type="GO" id="GO:0005576">
    <property type="term" value="C:extracellular region"/>
    <property type="evidence" value="ECO:0007669"/>
    <property type="project" value="UniProtKB-SubCell"/>
</dbReference>
<dbReference type="GO" id="GO:0000015">
    <property type="term" value="C:phosphopyruvate hydratase complex"/>
    <property type="evidence" value="ECO:0007669"/>
    <property type="project" value="InterPro"/>
</dbReference>
<dbReference type="GO" id="GO:0000287">
    <property type="term" value="F:magnesium ion binding"/>
    <property type="evidence" value="ECO:0007669"/>
    <property type="project" value="UniProtKB-UniRule"/>
</dbReference>
<dbReference type="GO" id="GO:0004634">
    <property type="term" value="F:phosphopyruvate hydratase activity"/>
    <property type="evidence" value="ECO:0007669"/>
    <property type="project" value="UniProtKB-UniRule"/>
</dbReference>
<dbReference type="GO" id="GO:0006096">
    <property type="term" value="P:glycolytic process"/>
    <property type="evidence" value="ECO:0007669"/>
    <property type="project" value="UniProtKB-UniRule"/>
</dbReference>
<dbReference type="CDD" id="cd03313">
    <property type="entry name" value="enolase"/>
    <property type="match status" value="1"/>
</dbReference>
<dbReference type="FunFam" id="3.20.20.120:FF:000001">
    <property type="entry name" value="Enolase"/>
    <property type="match status" value="1"/>
</dbReference>
<dbReference type="FunFam" id="3.30.390.10:FF:000001">
    <property type="entry name" value="Enolase"/>
    <property type="match status" value="1"/>
</dbReference>
<dbReference type="Gene3D" id="3.20.20.120">
    <property type="entry name" value="Enolase-like C-terminal domain"/>
    <property type="match status" value="1"/>
</dbReference>
<dbReference type="Gene3D" id="3.30.390.10">
    <property type="entry name" value="Enolase-like, N-terminal domain"/>
    <property type="match status" value="1"/>
</dbReference>
<dbReference type="HAMAP" id="MF_00318">
    <property type="entry name" value="Enolase"/>
    <property type="match status" value="1"/>
</dbReference>
<dbReference type="InterPro" id="IPR000941">
    <property type="entry name" value="Enolase"/>
</dbReference>
<dbReference type="InterPro" id="IPR036849">
    <property type="entry name" value="Enolase-like_C_sf"/>
</dbReference>
<dbReference type="InterPro" id="IPR029017">
    <property type="entry name" value="Enolase-like_N"/>
</dbReference>
<dbReference type="InterPro" id="IPR020810">
    <property type="entry name" value="Enolase_C"/>
</dbReference>
<dbReference type="InterPro" id="IPR020809">
    <property type="entry name" value="Enolase_CS"/>
</dbReference>
<dbReference type="InterPro" id="IPR020811">
    <property type="entry name" value="Enolase_N"/>
</dbReference>
<dbReference type="NCBIfam" id="TIGR01060">
    <property type="entry name" value="eno"/>
    <property type="match status" value="1"/>
</dbReference>
<dbReference type="PANTHER" id="PTHR11902">
    <property type="entry name" value="ENOLASE"/>
    <property type="match status" value="1"/>
</dbReference>
<dbReference type="PANTHER" id="PTHR11902:SF1">
    <property type="entry name" value="ENOLASE"/>
    <property type="match status" value="1"/>
</dbReference>
<dbReference type="Pfam" id="PF00113">
    <property type="entry name" value="Enolase_C"/>
    <property type="match status" value="1"/>
</dbReference>
<dbReference type="Pfam" id="PF03952">
    <property type="entry name" value="Enolase_N"/>
    <property type="match status" value="1"/>
</dbReference>
<dbReference type="PIRSF" id="PIRSF001400">
    <property type="entry name" value="Enolase"/>
    <property type="match status" value="1"/>
</dbReference>
<dbReference type="PRINTS" id="PR00148">
    <property type="entry name" value="ENOLASE"/>
</dbReference>
<dbReference type="SFLD" id="SFLDS00001">
    <property type="entry name" value="Enolase"/>
    <property type="match status" value="1"/>
</dbReference>
<dbReference type="SFLD" id="SFLDF00002">
    <property type="entry name" value="enolase"/>
    <property type="match status" value="1"/>
</dbReference>
<dbReference type="SMART" id="SM01192">
    <property type="entry name" value="Enolase_C"/>
    <property type="match status" value="1"/>
</dbReference>
<dbReference type="SMART" id="SM01193">
    <property type="entry name" value="Enolase_N"/>
    <property type="match status" value="1"/>
</dbReference>
<dbReference type="SUPFAM" id="SSF51604">
    <property type="entry name" value="Enolase C-terminal domain-like"/>
    <property type="match status" value="1"/>
</dbReference>
<dbReference type="SUPFAM" id="SSF54826">
    <property type="entry name" value="Enolase N-terminal domain-like"/>
    <property type="match status" value="1"/>
</dbReference>
<dbReference type="PROSITE" id="PS00164">
    <property type="entry name" value="ENOLASE"/>
    <property type="match status" value="1"/>
</dbReference>
<keyword id="KW-0963">Cytoplasm</keyword>
<keyword id="KW-0324">Glycolysis</keyword>
<keyword id="KW-0456">Lyase</keyword>
<keyword id="KW-0460">Magnesium</keyword>
<keyword id="KW-0479">Metal-binding</keyword>
<keyword id="KW-1185">Reference proteome</keyword>
<keyword id="KW-0964">Secreted</keyword>
<feature type="chain" id="PRO_1000115877" description="Enolase">
    <location>
        <begin position="1"/>
        <end position="440"/>
    </location>
</feature>
<feature type="active site" description="Proton donor" evidence="1">
    <location>
        <position position="205"/>
    </location>
</feature>
<feature type="active site" description="Proton acceptor" evidence="1">
    <location>
        <position position="340"/>
    </location>
</feature>
<feature type="binding site" evidence="1">
    <location>
        <position position="163"/>
    </location>
    <ligand>
        <name>(2R)-2-phosphoglycerate</name>
        <dbReference type="ChEBI" id="CHEBI:58289"/>
    </ligand>
</feature>
<feature type="binding site" evidence="1">
    <location>
        <position position="242"/>
    </location>
    <ligand>
        <name>Mg(2+)</name>
        <dbReference type="ChEBI" id="CHEBI:18420"/>
    </ligand>
</feature>
<feature type="binding site" evidence="1">
    <location>
        <position position="288"/>
    </location>
    <ligand>
        <name>Mg(2+)</name>
        <dbReference type="ChEBI" id="CHEBI:18420"/>
    </ligand>
</feature>
<feature type="binding site" evidence="1">
    <location>
        <position position="315"/>
    </location>
    <ligand>
        <name>Mg(2+)</name>
        <dbReference type="ChEBI" id="CHEBI:18420"/>
    </ligand>
</feature>
<feature type="binding site" evidence="1">
    <location>
        <position position="340"/>
    </location>
    <ligand>
        <name>(2R)-2-phosphoglycerate</name>
        <dbReference type="ChEBI" id="CHEBI:58289"/>
    </ligand>
</feature>
<feature type="binding site" evidence="1">
    <location>
        <position position="369"/>
    </location>
    <ligand>
        <name>(2R)-2-phosphoglycerate</name>
        <dbReference type="ChEBI" id="CHEBI:58289"/>
    </ligand>
</feature>
<feature type="binding site" evidence="1">
    <location>
        <position position="370"/>
    </location>
    <ligand>
        <name>(2R)-2-phosphoglycerate</name>
        <dbReference type="ChEBI" id="CHEBI:58289"/>
    </ligand>
</feature>
<feature type="binding site" evidence="1">
    <location>
        <position position="391"/>
    </location>
    <ligand>
        <name>(2R)-2-phosphoglycerate</name>
        <dbReference type="ChEBI" id="CHEBI:58289"/>
    </ligand>
</feature>
<comment type="function">
    <text evidence="1">Catalyzes the reversible conversion of 2-phosphoglycerate (2-PG) into phosphoenolpyruvate (PEP). It is essential for the degradation of carbohydrates via glycolysis.</text>
</comment>
<comment type="catalytic activity">
    <reaction evidence="1">
        <text>(2R)-2-phosphoglycerate = phosphoenolpyruvate + H2O</text>
        <dbReference type="Rhea" id="RHEA:10164"/>
        <dbReference type="ChEBI" id="CHEBI:15377"/>
        <dbReference type="ChEBI" id="CHEBI:58289"/>
        <dbReference type="ChEBI" id="CHEBI:58702"/>
        <dbReference type="EC" id="4.2.1.11"/>
    </reaction>
</comment>
<comment type="cofactor">
    <cofactor evidence="1">
        <name>Mg(2+)</name>
        <dbReference type="ChEBI" id="CHEBI:18420"/>
    </cofactor>
    <text evidence="1">Binds a second Mg(2+) ion via substrate during catalysis.</text>
</comment>
<comment type="pathway">
    <text evidence="1">Carbohydrate degradation; glycolysis; pyruvate from D-glyceraldehyde 3-phosphate: step 4/5.</text>
</comment>
<comment type="subcellular location">
    <subcellularLocation>
        <location evidence="1">Cytoplasm</location>
    </subcellularLocation>
    <subcellularLocation>
        <location evidence="1">Secreted</location>
    </subcellularLocation>
    <subcellularLocation>
        <location evidence="1">Cell surface</location>
    </subcellularLocation>
    <text evidence="1">Fractions of enolase are present in both the cytoplasm and on the cell surface.</text>
</comment>
<comment type="similarity">
    <text evidence="1">Belongs to the enolase family.</text>
</comment>
<evidence type="ECO:0000255" key="1">
    <source>
        <dbReference type="HAMAP-Rule" id="MF_00318"/>
    </source>
</evidence>
<reference key="1">
    <citation type="journal article" date="2008" name="DNA Res.">
        <title>Comparative genome analysis of Lactobacillus reuteri and Lactobacillus fermentum reveal a genomic island for reuterin and cobalamin production.</title>
        <authorList>
            <person name="Morita H."/>
            <person name="Toh H."/>
            <person name="Fukuda S."/>
            <person name="Horikawa H."/>
            <person name="Oshima K."/>
            <person name="Suzuki T."/>
            <person name="Murakami M."/>
            <person name="Hisamatsu S."/>
            <person name="Kato Y."/>
            <person name="Takizawa T."/>
            <person name="Fukuoka H."/>
            <person name="Yoshimura T."/>
            <person name="Itoh K."/>
            <person name="O'Sullivan D.J."/>
            <person name="McKay L.L."/>
            <person name="Ohno H."/>
            <person name="Kikuchi J."/>
            <person name="Masaoka T."/>
            <person name="Hattori M."/>
        </authorList>
    </citation>
    <scope>NUCLEOTIDE SEQUENCE [LARGE SCALE GENOMIC DNA]</scope>
    <source>
        <strain>NBRC 3956 / LMG 18251</strain>
    </source>
</reference>
<gene>
    <name evidence="1" type="primary">eno</name>
    <name type="ordered locus">LAF_0366</name>
</gene>
<proteinExistence type="inferred from homology"/>
<accession>B2GAM0</accession>
<sequence length="440" mass="47791">MSLITDIYAREVLDSRGNPTVEAEVYTEAGGVGRGIVPSGASTGEHEAVELRDGDKDRFGGKGVLKAVANVNNVIAKEIVGMEVTDQIAIDKAMIALDGTPNKGKLGANAILAVSLATARAAADELQVPLYNYLGGFNAHVMPTPMMNVINGGAHSDNKVDFQEFMIMPVGAPTVREAIRMGSETFHALKKALEADGKVTSVGDEGGFAPDFANNEEPFEYLIKAIEAAGYKPGKDVAIAFDVAASELWNDEDKKYKLHWSTGEEYTTEEWIEYLSDIIAKYPVVSVEDPIDENNWDDWVTLTNKLGKKVQLVGDDFFVTNTDYLAKGIKMGAANSILIKLNQIGTLTETVEAIEMAKEAGYTAIVSHRSGETEDTTIADLVVATNAGQIKTGSMSRTDRLAKYNQLMRIEDNLGDVAKYKGIRSFYNLSEQAKQDIENR</sequence>
<protein>
    <recommendedName>
        <fullName evidence="1">Enolase</fullName>
        <ecNumber evidence="1">4.2.1.11</ecNumber>
    </recommendedName>
    <alternativeName>
        <fullName evidence="1">2-phospho-D-glycerate hydro-lyase</fullName>
    </alternativeName>
    <alternativeName>
        <fullName evidence="1">2-phosphoglycerate dehydratase</fullName>
    </alternativeName>
</protein>
<name>ENO_LIMF3</name>